<organism>
    <name type="scientific">Leptospira borgpetersenii serovar Hardjo-bovis (strain JB197)</name>
    <dbReference type="NCBI Taxonomy" id="355277"/>
    <lineage>
        <taxon>Bacteria</taxon>
        <taxon>Pseudomonadati</taxon>
        <taxon>Spirochaetota</taxon>
        <taxon>Spirochaetia</taxon>
        <taxon>Leptospirales</taxon>
        <taxon>Leptospiraceae</taxon>
        <taxon>Leptospira</taxon>
    </lineage>
</organism>
<gene>
    <name evidence="1" type="primary">nuoB</name>
    <name type="ordered locus">LBJ_0502</name>
</gene>
<protein>
    <recommendedName>
        <fullName evidence="1">NADH-quinone oxidoreductase subunit B</fullName>
        <ecNumber evidence="1">7.1.1.-</ecNumber>
    </recommendedName>
    <alternativeName>
        <fullName evidence="1">NADH dehydrogenase I subunit B</fullName>
    </alternativeName>
    <alternativeName>
        <fullName evidence="1">NDH-1 subunit B</fullName>
    </alternativeName>
</protein>
<feature type="chain" id="PRO_0000376261" description="NADH-quinone oxidoreductase subunit B">
    <location>
        <begin position="1"/>
        <end position="186"/>
    </location>
</feature>
<feature type="binding site" evidence="1">
    <location>
        <position position="44"/>
    </location>
    <ligand>
        <name>[4Fe-4S] cluster</name>
        <dbReference type="ChEBI" id="CHEBI:49883"/>
    </ligand>
</feature>
<feature type="binding site" evidence="1">
    <location>
        <position position="45"/>
    </location>
    <ligand>
        <name>[4Fe-4S] cluster</name>
        <dbReference type="ChEBI" id="CHEBI:49883"/>
    </ligand>
</feature>
<feature type="binding site" evidence="1">
    <location>
        <position position="110"/>
    </location>
    <ligand>
        <name>[4Fe-4S] cluster</name>
        <dbReference type="ChEBI" id="CHEBI:49883"/>
    </ligand>
</feature>
<feature type="binding site" evidence="1">
    <location>
        <position position="139"/>
    </location>
    <ligand>
        <name>[4Fe-4S] cluster</name>
        <dbReference type="ChEBI" id="CHEBI:49883"/>
    </ligand>
</feature>
<reference key="1">
    <citation type="journal article" date="2006" name="Proc. Natl. Acad. Sci. U.S.A.">
        <title>Genome reduction in Leptospira borgpetersenii reflects limited transmission potential.</title>
        <authorList>
            <person name="Bulach D.M."/>
            <person name="Zuerner R.L."/>
            <person name="Wilson P."/>
            <person name="Seemann T."/>
            <person name="McGrath A."/>
            <person name="Cullen P.A."/>
            <person name="Davis J."/>
            <person name="Johnson M."/>
            <person name="Kuczek E."/>
            <person name="Alt D.P."/>
            <person name="Peterson-Burch B."/>
            <person name="Coppel R.L."/>
            <person name="Rood J.I."/>
            <person name="Davies J.K."/>
            <person name="Adler B."/>
        </authorList>
    </citation>
    <scope>NUCLEOTIDE SEQUENCE [LARGE SCALE GENOMIC DNA]</scope>
    <source>
        <strain>JB197</strain>
    </source>
</reference>
<proteinExistence type="inferred from homology"/>
<accession>Q04V71</accession>
<keyword id="KW-0004">4Fe-4S</keyword>
<keyword id="KW-0997">Cell inner membrane</keyword>
<keyword id="KW-1003">Cell membrane</keyword>
<keyword id="KW-0408">Iron</keyword>
<keyword id="KW-0411">Iron-sulfur</keyword>
<keyword id="KW-0472">Membrane</keyword>
<keyword id="KW-0479">Metal-binding</keyword>
<keyword id="KW-0520">NAD</keyword>
<keyword id="KW-0874">Quinone</keyword>
<keyword id="KW-1278">Translocase</keyword>
<keyword id="KW-0813">Transport</keyword>
<keyword id="KW-0830">Ubiquinone</keyword>
<sequence>MGLSDLSKAPGQALGDMLQLGNIESVIQWGRGNSLWPFPFATACCGIEYMSTACSDYDIARFGAERPSFSPRQADMILVLGTITYKMAPVLRQIYDQMAEPKFVISVGACASSGGMFNTYGVLQGVDRILPVDIYVPGCPPRPEAILDALVKLQTKLKTQGLEARRQEVMQKIQELNERNKPLVVR</sequence>
<name>NUOB_LEPBJ</name>
<evidence type="ECO:0000255" key="1">
    <source>
        <dbReference type="HAMAP-Rule" id="MF_01356"/>
    </source>
</evidence>
<comment type="function">
    <text evidence="1">NDH-1 shuttles electrons from NADH, via FMN and iron-sulfur (Fe-S) centers, to quinones in the respiratory chain. The immediate electron acceptor for the enzyme in this species is believed to be ubiquinone. Couples the redox reaction to proton translocation (for every two electrons transferred, four hydrogen ions are translocated across the cytoplasmic membrane), and thus conserves the redox energy in a proton gradient.</text>
</comment>
<comment type="catalytic activity">
    <reaction evidence="1">
        <text>a quinone + NADH + 5 H(+)(in) = a quinol + NAD(+) + 4 H(+)(out)</text>
        <dbReference type="Rhea" id="RHEA:57888"/>
        <dbReference type="ChEBI" id="CHEBI:15378"/>
        <dbReference type="ChEBI" id="CHEBI:24646"/>
        <dbReference type="ChEBI" id="CHEBI:57540"/>
        <dbReference type="ChEBI" id="CHEBI:57945"/>
        <dbReference type="ChEBI" id="CHEBI:132124"/>
    </reaction>
</comment>
<comment type="cofactor">
    <cofactor evidence="1">
        <name>[4Fe-4S] cluster</name>
        <dbReference type="ChEBI" id="CHEBI:49883"/>
    </cofactor>
    <text evidence="1">Binds 1 [4Fe-4S] cluster.</text>
</comment>
<comment type="subunit">
    <text evidence="1">NDH-1 is composed of 14 different subunits. Subunits NuoB, C, D, E, F, and G constitute the peripheral sector of the complex.</text>
</comment>
<comment type="subcellular location">
    <subcellularLocation>
        <location evidence="1">Cell inner membrane</location>
        <topology evidence="1">Peripheral membrane protein</topology>
        <orientation evidence="1">Cytoplasmic side</orientation>
    </subcellularLocation>
</comment>
<comment type="similarity">
    <text evidence="1">Belongs to the complex I 20 kDa subunit family.</text>
</comment>
<dbReference type="EC" id="7.1.1.-" evidence="1"/>
<dbReference type="EMBL" id="CP000350">
    <property type="protein sequence ID" value="ABJ75199.1"/>
    <property type="molecule type" value="Genomic_DNA"/>
</dbReference>
<dbReference type="RefSeq" id="WP_002754690.1">
    <property type="nucleotide sequence ID" value="NC_008510.1"/>
</dbReference>
<dbReference type="SMR" id="Q04V71"/>
<dbReference type="KEGG" id="lbj:LBJ_0502"/>
<dbReference type="HOGENOM" id="CLU_055737_7_3_12"/>
<dbReference type="Proteomes" id="UP000000656">
    <property type="component" value="Chromosome 1"/>
</dbReference>
<dbReference type="GO" id="GO:0005886">
    <property type="term" value="C:plasma membrane"/>
    <property type="evidence" value="ECO:0007669"/>
    <property type="project" value="UniProtKB-SubCell"/>
</dbReference>
<dbReference type="GO" id="GO:0045271">
    <property type="term" value="C:respiratory chain complex I"/>
    <property type="evidence" value="ECO:0007669"/>
    <property type="project" value="TreeGrafter"/>
</dbReference>
<dbReference type="GO" id="GO:0051539">
    <property type="term" value="F:4 iron, 4 sulfur cluster binding"/>
    <property type="evidence" value="ECO:0007669"/>
    <property type="project" value="UniProtKB-KW"/>
</dbReference>
<dbReference type="GO" id="GO:0005506">
    <property type="term" value="F:iron ion binding"/>
    <property type="evidence" value="ECO:0007669"/>
    <property type="project" value="UniProtKB-UniRule"/>
</dbReference>
<dbReference type="GO" id="GO:0008137">
    <property type="term" value="F:NADH dehydrogenase (ubiquinone) activity"/>
    <property type="evidence" value="ECO:0007669"/>
    <property type="project" value="InterPro"/>
</dbReference>
<dbReference type="GO" id="GO:0050136">
    <property type="term" value="F:NADH:ubiquinone reductase (non-electrogenic) activity"/>
    <property type="evidence" value="ECO:0007669"/>
    <property type="project" value="UniProtKB-UniRule"/>
</dbReference>
<dbReference type="GO" id="GO:0048038">
    <property type="term" value="F:quinone binding"/>
    <property type="evidence" value="ECO:0007669"/>
    <property type="project" value="UniProtKB-KW"/>
</dbReference>
<dbReference type="GO" id="GO:0009060">
    <property type="term" value="P:aerobic respiration"/>
    <property type="evidence" value="ECO:0007669"/>
    <property type="project" value="TreeGrafter"/>
</dbReference>
<dbReference type="GO" id="GO:0015990">
    <property type="term" value="P:electron transport coupled proton transport"/>
    <property type="evidence" value="ECO:0007669"/>
    <property type="project" value="TreeGrafter"/>
</dbReference>
<dbReference type="FunFam" id="3.40.50.12280:FF:000002">
    <property type="entry name" value="NADH-quinone oxidoreductase subunit B"/>
    <property type="match status" value="1"/>
</dbReference>
<dbReference type="Gene3D" id="3.40.50.12280">
    <property type="match status" value="1"/>
</dbReference>
<dbReference type="HAMAP" id="MF_01356">
    <property type="entry name" value="NDH1_NuoB"/>
    <property type="match status" value="1"/>
</dbReference>
<dbReference type="InterPro" id="IPR006137">
    <property type="entry name" value="NADH_UbQ_OxRdtase-like_20kDa"/>
</dbReference>
<dbReference type="InterPro" id="IPR006138">
    <property type="entry name" value="NADH_UQ_OxRdtase_20Kd_su"/>
</dbReference>
<dbReference type="NCBIfam" id="TIGR01957">
    <property type="entry name" value="nuoB_fam"/>
    <property type="match status" value="1"/>
</dbReference>
<dbReference type="NCBIfam" id="NF005012">
    <property type="entry name" value="PRK06411.1"/>
    <property type="match status" value="1"/>
</dbReference>
<dbReference type="NCBIfam" id="NF011389">
    <property type="entry name" value="PRK14814.1"/>
    <property type="match status" value="1"/>
</dbReference>
<dbReference type="PANTHER" id="PTHR11995">
    <property type="entry name" value="NADH DEHYDROGENASE"/>
    <property type="match status" value="1"/>
</dbReference>
<dbReference type="PANTHER" id="PTHR11995:SF14">
    <property type="entry name" value="NADH DEHYDROGENASE [UBIQUINONE] IRON-SULFUR PROTEIN 7, MITOCHONDRIAL"/>
    <property type="match status" value="1"/>
</dbReference>
<dbReference type="Pfam" id="PF01058">
    <property type="entry name" value="Oxidored_q6"/>
    <property type="match status" value="1"/>
</dbReference>
<dbReference type="SUPFAM" id="SSF56770">
    <property type="entry name" value="HydA/Nqo6-like"/>
    <property type="match status" value="1"/>
</dbReference>
<dbReference type="PROSITE" id="PS01150">
    <property type="entry name" value="COMPLEX1_20K"/>
    <property type="match status" value="1"/>
</dbReference>